<comment type="function">
    <text evidence="1">DNA-dependent RNA polymerase catalyzes the transcription of DNA into RNA using the four ribonucleoside triphosphates as substrates.</text>
</comment>
<comment type="catalytic activity">
    <reaction evidence="1">
        <text>RNA(n) + a ribonucleoside 5'-triphosphate = RNA(n+1) + diphosphate</text>
        <dbReference type="Rhea" id="RHEA:21248"/>
        <dbReference type="Rhea" id="RHEA-COMP:14527"/>
        <dbReference type="Rhea" id="RHEA-COMP:17342"/>
        <dbReference type="ChEBI" id="CHEBI:33019"/>
        <dbReference type="ChEBI" id="CHEBI:61557"/>
        <dbReference type="ChEBI" id="CHEBI:140395"/>
        <dbReference type="EC" id="2.7.7.6"/>
    </reaction>
</comment>
<comment type="subunit">
    <text evidence="1">Homodimer. The RNAP catalytic core consists of 2 alpha, 1 beta, 1 beta' and 1 omega subunit. When a sigma factor is associated with the core the holoenzyme is formed, which can initiate transcription.</text>
</comment>
<comment type="domain">
    <text evidence="1">The N-terminal domain is essential for RNAP assembly and basal transcription, whereas the C-terminal domain is involved in interaction with transcriptional regulators and with upstream promoter elements.</text>
</comment>
<comment type="similarity">
    <text evidence="1">Belongs to the RNA polymerase alpha chain family.</text>
</comment>
<feature type="chain" id="PRO_1000091927" description="DNA-directed RNA polymerase subunit alpha">
    <location>
        <begin position="1"/>
        <end position="325"/>
    </location>
</feature>
<feature type="region of interest" description="Alpha N-terminal domain (alpha-NTD)" evidence="1">
    <location>
        <begin position="1"/>
        <end position="231"/>
    </location>
</feature>
<feature type="region of interest" description="Alpha C-terminal domain (alpha-CTD)" evidence="1">
    <location>
        <begin position="246"/>
        <end position="325"/>
    </location>
</feature>
<gene>
    <name evidence="1" type="primary">rpoA</name>
    <name type="ordered locus">BceJ2315_02630</name>
    <name type="ORF">BCAL0260</name>
</gene>
<proteinExistence type="inferred from homology"/>
<accession>B4E5E6</accession>
<sequence>MQTSLLKPKIIAVESLGENHARVVMEPFERGYGHTLGNALRRVLLSSMVGYAPTEVTIAGVVHEYSTLDGVQEDVVNLLLNLKGVVFKLHNRDEVTVTLRKEGEGVVTAGDIELAHDCEVINPNHVIAHLSKGGKLDVQIKIEKGRGYVPGNVRRYGEDTAKIIGRIVLDASFSPVRRVSYAVESARVEQRTDLDKLVMNIETSGVITPEEAIRQSARILVDQLSVFAALEGTETAAEAPSRAPQIDPILLRPVDDLELTVRSANCLKAENIYYIGDLIQRTENELLKTPNLGRKSLNEIKEVLASRGLTLGMKLENWPPAGLDK</sequence>
<name>RPOA_BURCJ</name>
<protein>
    <recommendedName>
        <fullName evidence="1">DNA-directed RNA polymerase subunit alpha</fullName>
        <shortName evidence="1">RNAP subunit alpha</shortName>
        <ecNumber evidence="1">2.7.7.6</ecNumber>
    </recommendedName>
    <alternativeName>
        <fullName evidence="1">RNA polymerase subunit alpha</fullName>
    </alternativeName>
    <alternativeName>
        <fullName evidence="1">Transcriptase subunit alpha</fullName>
    </alternativeName>
</protein>
<organism>
    <name type="scientific">Burkholderia cenocepacia (strain ATCC BAA-245 / DSM 16553 / LMG 16656 / NCTC 13227 / J2315 / CF5610)</name>
    <name type="common">Burkholderia cepacia (strain J2315)</name>
    <dbReference type="NCBI Taxonomy" id="216591"/>
    <lineage>
        <taxon>Bacteria</taxon>
        <taxon>Pseudomonadati</taxon>
        <taxon>Pseudomonadota</taxon>
        <taxon>Betaproteobacteria</taxon>
        <taxon>Burkholderiales</taxon>
        <taxon>Burkholderiaceae</taxon>
        <taxon>Burkholderia</taxon>
        <taxon>Burkholderia cepacia complex</taxon>
    </lineage>
</organism>
<reference key="1">
    <citation type="journal article" date="2009" name="J. Bacteriol.">
        <title>The genome of Burkholderia cenocepacia J2315, an epidemic pathogen of cystic fibrosis patients.</title>
        <authorList>
            <person name="Holden M.T."/>
            <person name="Seth-Smith H.M."/>
            <person name="Crossman L.C."/>
            <person name="Sebaihia M."/>
            <person name="Bentley S.D."/>
            <person name="Cerdeno-Tarraga A.M."/>
            <person name="Thomson N.R."/>
            <person name="Bason N."/>
            <person name="Quail M.A."/>
            <person name="Sharp S."/>
            <person name="Cherevach I."/>
            <person name="Churcher C."/>
            <person name="Goodhead I."/>
            <person name="Hauser H."/>
            <person name="Holroyd N."/>
            <person name="Mungall K."/>
            <person name="Scott P."/>
            <person name="Walker D."/>
            <person name="White B."/>
            <person name="Rose H."/>
            <person name="Iversen P."/>
            <person name="Mil-Homens D."/>
            <person name="Rocha E.P."/>
            <person name="Fialho A.M."/>
            <person name="Baldwin A."/>
            <person name="Dowson C."/>
            <person name="Barrell B.G."/>
            <person name="Govan J.R."/>
            <person name="Vandamme P."/>
            <person name="Hart C.A."/>
            <person name="Mahenthiralingam E."/>
            <person name="Parkhill J."/>
        </authorList>
    </citation>
    <scope>NUCLEOTIDE SEQUENCE [LARGE SCALE GENOMIC DNA]</scope>
    <source>
        <strain>ATCC BAA-245 / DSM 16553 / LMG 16656 / NCTC 13227 / J2315 / CF5610</strain>
    </source>
</reference>
<dbReference type="EC" id="2.7.7.6" evidence="1"/>
<dbReference type="EMBL" id="AM747720">
    <property type="protein sequence ID" value="CAR50571.1"/>
    <property type="molecule type" value="Genomic_DNA"/>
</dbReference>
<dbReference type="RefSeq" id="WP_006477176.1">
    <property type="nucleotide sequence ID" value="NC_011000.1"/>
</dbReference>
<dbReference type="SMR" id="B4E5E6"/>
<dbReference type="GeneID" id="98107134"/>
<dbReference type="KEGG" id="bcj:BCAL0260"/>
<dbReference type="eggNOG" id="COG0202">
    <property type="taxonomic scope" value="Bacteria"/>
</dbReference>
<dbReference type="HOGENOM" id="CLU_053084_0_0_4"/>
<dbReference type="BioCyc" id="BCEN216591:G1G1V-303-MONOMER"/>
<dbReference type="Proteomes" id="UP000001035">
    <property type="component" value="Chromosome 1"/>
</dbReference>
<dbReference type="GO" id="GO:0005737">
    <property type="term" value="C:cytoplasm"/>
    <property type="evidence" value="ECO:0007669"/>
    <property type="project" value="UniProtKB-ARBA"/>
</dbReference>
<dbReference type="GO" id="GO:0000428">
    <property type="term" value="C:DNA-directed RNA polymerase complex"/>
    <property type="evidence" value="ECO:0007669"/>
    <property type="project" value="UniProtKB-KW"/>
</dbReference>
<dbReference type="GO" id="GO:0003677">
    <property type="term" value="F:DNA binding"/>
    <property type="evidence" value="ECO:0007669"/>
    <property type="project" value="UniProtKB-UniRule"/>
</dbReference>
<dbReference type="GO" id="GO:0003899">
    <property type="term" value="F:DNA-directed RNA polymerase activity"/>
    <property type="evidence" value="ECO:0007669"/>
    <property type="project" value="UniProtKB-UniRule"/>
</dbReference>
<dbReference type="GO" id="GO:0046983">
    <property type="term" value="F:protein dimerization activity"/>
    <property type="evidence" value="ECO:0007669"/>
    <property type="project" value="InterPro"/>
</dbReference>
<dbReference type="GO" id="GO:0006351">
    <property type="term" value="P:DNA-templated transcription"/>
    <property type="evidence" value="ECO:0007669"/>
    <property type="project" value="UniProtKB-UniRule"/>
</dbReference>
<dbReference type="CDD" id="cd06928">
    <property type="entry name" value="RNAP_alpha_NTD"/>
    <property type="match status" value="1"/>
</dbReference>
<dbReference type="FunFam" id="1.10.150.20:FF:000001">
    <property type="entry name" value="DNA-directed RNA polymerase subunit alpha"/>
    <property type="match status" value="1"/>
</dbReference>
<dbReference type="FunFam" id="2.170.120.12:FF:000001">
    <property type="entry name" value="DNA-directed RNA polymerase subunit alpha"/>
    <property type="match status" value="1"/>
</dbReference>
<dbReference type="Gene3D" id="1.10.150.20">
    <property type="entry name" value="5' to 3' exonuclease, C-terminal subdomain"/>
    <property type="match status" value="1"/>
</dbReference>
<dbReference type="Gene3D" id="2.170.120.12">
    <property type="entry name" value="DNA-directed RNA polymerase, insert domain"/>
    <property type="match status" value="1"/>
</dbReference>
<dbReference type="Gene3D" id="3.30.1360.10">
    <property type="entry name" value="RNA polymerase, RBP11-like subunit"/>
    <property type="match status" value="1"/>
</dbReference>
<dbReference type="HAMAP" id="MF_00059">
    <property type="entry name" value="RNApol_bact_RpoA"/>
    <property type="match status" value="1"/>
</dbReference>
<dbReference type="InterPro" id="IPR011262">
    <property type="entry name" value="DNA-dir_RNA_pol_insert"/>
</dbReference>
<dbReference type="InterPro" id="IPR011263">
    <property type="entry name" value="DNA-dir_RNA_pol_RpoA/D/Rpb3"/>
</dbReference>
<dbReference type="InterPro" id="IPR011773">
    <property type="entry name" value="DNA-dir_RpoA"/>
</dbReference>
<dbReference type="InterPro" id="IPR036603">
    <property type="entry name" value="RBP11-like"/>
</dbReference>
<dbReference type="InterPro" id="IPR011260">
    <property type="entry name" value="RNAP_asu_C"/>
</dbReference>
<dbReference type="InterPro" id="IPR036643">
    <property type="entry name" value="RNApol_insert_sf"/>
</dbReference>
<dbReference type="NCBIfam" id="NF003513">
    <property type="entry name" value="PRK05182.1-2"/>
    <property type="match status" value="1"/>
</dbReference>
<dbReference type="NCBIfam" id="NF003519">
    <property type="entry name" value="PRK05182.2-5"/>
    <property type="match status" value="1"/>
</dbReference>
<dbReference type="NCBIfam" id="TIGR02027">
    <property type="entry name" value="rpoA"/>
    <property type="match status" value="1"/>
</dbReference>
<dbReference type="Pfam" id="PF01000">
    <property type="entry name" value="RNA_pol_A_bac"/>
    <property type="match status" value="1"/>
</dbReference>
<dbReference type="Pfam" id="PF03118">
    <property type="entry name" value="RNA_pol_A_CTD"/>
    <property type="match status" value="1"/>
</dbReference>
<dbReference type="Pfam" id="PF01193">
    <property type="entry name" value="RNA_pol_L"/>
    <property type="match status" value="1"/>
</dbReference>
<dbReference type="SMART" id="SM00662">
    <property type="entry name" value="RPOLD"/>
    <property type="match status" value="1"/>
</dbReference>
<dbReference type="SUPFAM" id="SSF47789">
    <property type="entry name" value="C-terminal domain of RNA polymerase alpha subunit"/>
    <property type="match status" value="1"/>
</dbReference>
<dbReference type="SUPFAM" id="SSF56553">
    <property type="entry name" value="Insert subdomain of RNA polymerase alpha subunit"/>
    <property type="match status" value="1"/>
</dbReference>
<dbReference type="SUPFAM" id="SSF55257">
    <property type="entry name" value="RBP11-like subunits of RNA polymerase"/>
    <property type="match status" value="1"/>
</dbReference>
<evidence type="ECO:0000255" key="1">
    <source>
        <dbReference type="HAMAP-Rule" id="MF_00059"/>
    </source>
</evidence>
<keyword id="KW-0240">DNA-directed RNA polymerase</keyword>
<keyword id="KW-0548">Nucleotidyltransferase</keyword>
<keyword id="KW-0804">Transcription</keyword>
<keyword id="KW-0808">Transferase</keyword>